<comment type="cofactor">
    <cofactor evidence="1">
        <name>pyridoxal 5'-phosphate</name>
        <dbReference type="ChEBI" id="CHEBI:597326"/>
    </cofactor>
</comment>
<comment type="subcellular location">
    <subcellularLocation>
        <location evidence="1">Cytoplasm</location>
    </subcellularLocation>
</comment>
<comment type="similarity">
    <text evidence="2">Belongs to the cysteine synthase/cystathionine beta-synthase family.</text>
</comment>
<comment type="caution">
    <text evidence="2">Could be the product of a pseudogene. A stop codon at position 188 results in a truncated and certainly non functional protein.</text>
</comment>
<comment type="sequence caution" evidence="2">
    <conflict type="erroneous gene model prediction">
        <sequence resource="EMBL-CDS" id="BAB01461"/>
    </conflict>
</comment>
<gene>
    <name type="primary">OASA2</name>
    <name type="synonym">OAS4</name>
    <name type="ordered locus">At3g22460</name>
    <name type="ORF">F16J14.2</name>
</gene>
<keyword id="KW-0028">Amino-acid biosynthesis</keyword>
<keyword id="KW-0198">Cysteine biosynthesis</keyword>
<keyword id="KW-0963">Cytoplasm</keyword>
<keyword id="KW-0456">Lyase</keyword>
<keyword id="KW-0663">Pyridoxal phosphate</keyword>
<keyword id="KW-1185">Reference proteome</keyword>
<keyword id="KW-0808">Transferase</keyword>
<dbReference type="EMBL" id="AJ272028">
    <property type="status" value="NOT_ANNOTATED_CDS"/>
    <property type="molecule type" value="Genomic_DNA"/>
</dbReference>
<dbReference type="EMBL" id="AP000731">
    <property type="protein sequence ID" value="BAB01461.1"/>
    <property type="status" value="ALT_SEQ"/>
    <property type="molecule type" value="Genomic_DNA"/>
</dbReference>
<dbReference type="EMBL" id="CP002686">
    <property type="protein sequence ID" value="ANM63967.1"/>
    <property type="molecule type" value="Genomic_DNA"/>
</dbReference>
<dbReference type="EMBL" id="AY063827">
    <property type="status" value="NOT_ANNOTATED_CDS"/>
    <property type="molecule type" value="Genomic_DNA"/>
</dbReference>
<dbReference type="EMBL" id="BT031364">
    <property type="protein sequence ID" value="ACB88823.1"/>
    <property type="molecule type" value="mRNA"/>
</dbReference>
<dbReference type="RefSeq" id="NP_001326025.1">
    <property type="nucleotide sequence ID" value="NM_001338588.1"/>
</dbReference>
<dbReference type="SMR" id="Q9LJA0"/>
<dbReference type="BioGRID" id="7149">
    <property type="interactions" value="11"/>
</dbReference>
<dbReference type="FunCoup" id="Q9LJA0">
    <property type="interactions" value="675"/>
</dbReference>
<dbReference type="STRING" id="3702.Q9LJA0"/>
<dbReference type="GlyGen" id="Q9LJA0">
    <property type="glycosylation" value="1 site"/>
</dbReference>
<dbReference type="PaxDb" id="3702-AT3G22460.1"/>
<dbReference type="ProMEX" id="Q9LJA0"/>
<dbReference type="EnsemblPlants" id="AT3G22460.2">
    <property type="protein sequence ID" value="AT3G22460.2"/>
    <property type="gene ID" value="AT3G22460"/>
</dbReference>
<dbReference type="GeneID" id="821817"/>
<dbReference type="Gramene" id="AT3G22460.2">
    <property type="protein sequence ID" value="AT3G22460.2"/>
    <property type="gene ID" value="AT3G22460"/>
</dbReference>
<dbReference type="KEGG" id="ath:AT3G22460"/>
<dbReference type="Araport" id="AT3G22460"/>
<dbReference type="TAIR" id="AT3G22460">
    <property type="gene designation" value="OASA2"/>
</dbReference>
<dbReference type="eggNOG" id="KOG1252">
    <property type="taxonomic scope" value="Eukaryota"/>
</dbReference>
<dbReference type="HOGENOM" id="CLU_021018_1_1_1"/>
<dbReference type="InParanoid" id="Q9LJA0"/>
<dbReference type="PhylomeDB" id="Q9LJA0"/>
<dbReference type="BioCyc" id="ARA:AT3G22460-MONOMER"/>
<dbReference type="Proteomes" id="UP000006548">
    <property type="component" value="Chromosome 3"/>
</dbReference>
<dbReference type="ExpressionAtlas" id="Q9LJA0">
    <property type="expression patterns" value="baseline and differential"/>
</dbReference>
<dbReference type="GO" id="GO:0005829">
    <property type="term" value="C:cytosol"/>
    <property type="evidence" value="ECO:0007005"/>
    <property type="project" value="TAIR"/>
</dbReference>
<dbReference type="GO" id="GO:0016829">
    <property type="term" value="F:lyase activity"/>
    <property type="evidence" value="ECO:0007669"/>
    <property type="project" value="UniProtKB-KW"/>
</dbReference>
<dbReference type="GO" id="GO:0016740">
    <property type="term" value="F:transferase activity"/>
    <property type="evidence" value="ECO:0007669"/>
    <property type="project" value="UniProtKB-KW"/>
</dbReference>
<dbReference type="GO" id="GO:0006535">
    <property type="term" value="P:cysteine biosynthetic process from serine"/>
    <property type="evidence" value="ECO:0007669"/>
    <property type="project" value="InterPro"/>
</dbReference>
<dbReference type="GO" id="GO:0010043">
    <property type="term" value="P:response to zinc ion"/>
    <property type="evidence" value="ECO:0000270"/>
    <property type="project" value="TAIR"/>
</dbReference>
<dbReference type="CDD" id="cd01561">
    <property type="entry name" value="CBS_like"/>
    <property type="match status" value="1"/>
</dbReference>
<dbReference type="FunFam" id="3.40.50.1100:FF:000002">
    <property type="entry name" value="Cysteine synthase"/>
    <property type="match status" value="1"/>
</dbReference>
<dbReference type="Gene3D" id="3.40.50.1100">
    <property type="match status" value="2"/>
</dbReference>
<dbReference type="InterPro" id="IPR050214">
    <property type="entry name" value="Cys_Synth/Cystath_Beta-Synth"/>
</dbReference>
<dbReference type="InterPro" id="IPR001216">
    <property type="entry name" value="P-phosphate_BS"/>
</dbReference>
<dbReference type="InterPro" id="IPR001926">
    <property type="entry name" value="TrpB-like_PALP"/>
</dbReference>
<dbReference type="InterPro" id="IPR036052">
    <property type="entry name" value="TrpB-like_PALP_sf"/>
</dbReference>
<dbReference type="PANTHER" id="PTHR10314">
    <property type="entry name" value="CYSTATHIONINE BETA-SYNTHASE"/>
    <property type="match status" value="1"/>
</dbReference>
<dbReference type="Pfam" id="PF00291">
    <property type="entry name" value="PALP"/>
    <property type="match status" value="1"/>
</dbReference>
<dbReference type="SUPFAM" id="SSF53686">
    <property type="entry name" value="Tryptophan synthase beta subunit-like PLP-dependent enzymes"/>
    <property type="match status" value="1"/>
</dbReference>
<dbReference type="PROSITE" id="PS00901">
    <property type="entry name" value="CYS_SYNTHASE"/>
    <property type="match status" value="1"/>
</dbReference>
<accession>Q9LJA0</accession>
<accession>B2GVN3</accession>
<feature type="chain" id="PRO_0000424457" description="Putative inactive cysteine synthase 2">
    <location>
        <begin position="1"/>
        <end position="188"/>
    </location>
</feature>
<feature type="binding site" evidence="1">
    <location>
        <position position="80"/>
    </location>
    <ligand>
        <name>pyridoxal 5'-phosphate</name>
        <dbReference type="ChEBI" id="CHEBI:597326"/>
    </ligand>
</feature>
<feature type="binding site" evidence="1">
    <location>
        <begin position="184"/>
        <end position="188"/>
    </location>
    <ligand>
        <name>pyridoxal 5'-phosphate</name>
        <dbReference type="ChEBI" id="CHEBI:597326"/>
    </ligand>
</feature>
<feature type="modified residue" description="N6-(pyridoxal phosphate)lysine" evidence="1">
    <location>
        <position position="49"/>
    </location>
</feature>
<proteinExistence type="uncertain"/>
<reference key="1">
    <citation type="journal article" date="2000" name="Gene">
        <title>Genomic and functional characterization of the oas gene family encoding O-acetylserine (thiol) lyases, enzymes catalyzing the final step in cysteine biosynthesis in Arabidopsis thaliana.</title>
        <authorList>
            <person name="Jost R."/>
            <person name="Berkowitz O."/>
            <person name="Wirtz M."/>
            <person name="Hopkins L."/>
            <person name="Hawkesford M.J."/>
            <person name="Hell R."/>
        </authorList>
    </citation>
    <scope>NUCLEOTIDE SEQUENCE [GENOMIC DNA]</scope>
    <source>
        <strain>cv. Columbia</strain>
    </source>
</reference>
<reference key="2">
    <citation type="journal article" date="2000" name="DNA Res.">
        <title>Structural analysis of Arabidopsis thaliana chromosome 3. II. Sequence features of the 4,251,695 bp regions covered by 90 P1, TAC and BAC clones.</title>
        <authorList>
            <person name="Kaneko T."/>
            <person name="Katoh T."/>
            <person name="Sato S."/>
            <person name="Nakamura Y."/>
            <person name="Asamizu E."/>
            <person name="Tabata S."/>
        </authorList>
    </citation>
    <scope>NUCLEOTIDE SEQUENCE [LARGE SCALE GENOMIC DNA]</scope>
    <source>
        <strain>cv. Columbia</strain>
    </source>
</reference>
<reference key="3">
    <citation type="journal article" date="2017" name="Plant J.">
        <title>Araport11: a complete reannotation of the Arabidopsis thaliana reference genome.</title>
        <authorList>
            <person name="Cheng C.Y."/>
            <person name="Krishnakumar V."/>
            <person name="Chan A.P."/>
            <person name="Thibaud-Nissen F."/>
            <person name="Schobel S."/>
            <person name="Town C.D."/>
        </authorList>
    </citation>
    <scope>GENOME REANNOTATION</scope>
    <source>
        <strain>cv. Columbia</strain>
    </source>
</reference>
<reference key="4">
    <citation type="journal article" date="2003" name="Science">
        <title>Empirical analysis of transcriptional activity in the Arabidopsis genome.</title>
        <authorList>
            <person name="Yamada K."/>
            <person name="Lim J."/>
            <person name="Dale J.M."/>
            <person name="Chen H."/>
            <person name="Shinn P."/>
            <person name="Palm C.J."/>
            <person name="Southwick A.M."/>
            <person name="Wu H.C."/>
            <person name="Kim C.J."/>
            <person name="Nguyen M."/>
            <person name="Pham P.K."/>
            <person name="Cheuk R.F."/>
            <person name="Karlin-Newmann G."/>
            <person name="Liu S.X."/>
            <person name="Lam B."/>
            <person name="Sakano H."/>
            <person name="Wu T."/>
            <person name="Yu G."/>
            <person name="Miranda M."/>
            <person name="Quach H.L."/>
            <person name="Tripp M."/>
            <person name="Chang C.H."/>
            <person name="Lee J.M."/>
            <person name="Toriumi M.J."/>
            <person name="Chan M.M."/>
            <person name="Tang C.C."/>
            <person name="Onodera C.S."/>
            <person name="Deng J.M."/>
            <person name="Akiyama K."/>
            <person name="Ansari Y."/>
            <person name="Arakawa T."/>
            <person name="Banh J."/>
            <person name="Banno F."/>
            <person name="Bowser L."/>
            <person name="Brooks S.Y."/>
            <person name="Carninci P."/>
            <person name="Chao Q."/>
            <person name="Choy N."/>
            <person name="Enju A."/>
            <person name="Goldsmith A.D."/>
            <person name="Gurjal M."/>
            <person name="Hansen N.F."/>
            <person name="Hayashizaki Y."/>
            <person name="Johnson-Hopson C."/>
            <person name="Hsuan V.W."/>
            <person name="Iida K."/>
            <person name="Karnes M."/>
            <person name="Khan S."/>
            <person name="Koesema E."/>
            <person name="Ishida J."/>
            <person name="Jiang P.X."/>
            <person name="Jones T."/>
            <person name="Kawai J."/>
            <person name="Kamiya A."/>
            <person name="Meyers C."/>
            <person name="Nakajima M."/>
            <person name="Narusaka M."/>
            <person name="Seki M."/>
            <person name="Sakurai T."/>
            <person name="Satou M."/>
            <person name="Tamse R."/>
            <person name="Vaysberg M."/>
            <person name="Wallender E.K."/>
            <person name="Wong C."/>
            <person name="Yamamura Y."/>
            <person name="Yuan S."/>
            <person name="Shinozaki K."/>
            <person name="Davis R.W."/>
            <person name="Theologis A."/>
            <person name="Ecker J.R."/>
        </authorList>
    </citation>
    <scope>NUCLEOTIDE SEQUENCE [LARGE SCALE MRNA]</scope>
    <source>
        <strain>cv. Columbia</strain>
    </source>
</reference>
<reference key="5">
    <citation type="submission" date="2008-04" db="EMBL/GenBank/DDBJ databases">
        <title>Arabidopsis ORF clones.</title>
        <authorList>
            <person name="de los Reyes C."/>
            <person name="Quan R."/>
            <person name="Chen H."/>
            <person name="Bautista V."/>
            <person name="Kim C.J."/>
            <person name="Ecker J.R."/>
        </authorList>
    </citation>
    <scope>NUCLEOTIDE SEQUENCE [LARGE SCALE MRNA]</scope>
    <source>
        <strain>cv. Columbia</strain>
    </source>
</reference>
<reference key="6">
    <citation type="journal article" date="2000" name="Plant Physiol.">
        <title>beta-Cyanoalanine synthase is a mitochondrial cysteine synthase-like protein in spinach and Arabidopsis.</title>
        <authorList>
            <person name="Hatzfeld Y."/>
            <person name="Maruyama A."/>
            <person name="Schmidt A."/>
            <person name="Noji M."/>
            <person name="Ishizawa K."/>
            <person name="Saito K."/>
        </authorList>
    </citation>
    <scope>NOMENCLATURE</scope>
</reference>
<reference key="7">
    <citation type="journal article" date="2005" name="Photosyn. Res.">
        <title>Synthesis of the sulfur amino acids: cysteine and methionine.</title>
        <authorList>
            <person name="Wirtz M."/>
            <person name="Droux M."/>
        </authorList>
    </citation>
    <scope>REVIEW</scope>
</reference>
<reference key="8">
    <citation type="journal article" date="2008" name="Plant Physiol.">
        <title>Physiological roles of the beta-substituted alanine synthase gene family in Arabidopsis.</title>
        <authorList>
            <person name="Watanabe M."/>
            <person name="Kusano M."/>
            <person name="Oikawa A."/>
            <person name="Fukushima A."/>
            <person name="Noji M."/>
            <person name="Saito K."/>
        </authorList>
    </citation>
    <scope>GENE FAMILY</scope>
</reference>
<name>CYSK2_ARATH</name>
<evidence type="ECO:0000250" key="1"/>
<evidence type="ECO:0000305" key="2"/>
<sequence length="188" mass="19638">MASVAPKIAKDVTELIGNTPLVYLNKVAKDCVGHVAAKLEMMEPCSSVKDRIGYSMIADAEAKGLIKPGESVLIEPTSGNTGVGLAFTAAAKGYKLVITMPASMSIERRIILLAFGAELILTDPAKGMKGAVAKAEEILAKTPNGYMLQQFENPANPKIHYETTGPEIWKGSGGKVDGFVSGIGTGGT</sequence>
<protein>
    <recommendedName>
        <fullName>Putative inactive cysteine synthase 2</fullName>
    </recommendedName>
    <alternativeName>
        <fullName>Beta-substituted Ala synthase 1;2</fullName>
        <shortName>ARAth-Bsas1;2</shortName>
    </alternativeName>
    <alternativeName>
        <fullName>O-acetylserine (thiol)-lyase 4</fullName>
    </alternativeName>
</protein>
<organism>
    <name type="scientific">Arabidopsis thaliana</name>
    <name type="common">Mouse-ear cress</name>
    <dbReference type="NCBI Taxonomy" id="3702"/>
    <lineage>
        <taxon>Eukaryota</taxon>
        <taxon>Viridiplantae</taxon>
        <taxon>Streptophyta</taxon>
        <taxon>Embryophyta</taxon>
        <taxon>Tracheophyta</taxon>
        <taxon>Spermatophyta</taxon>
        <taxon>Magnoliopsida</taxon>
        <taxon>eudicotyledons</taxon>
        <taxon>Gunneridae</taxon>
        <taxon>Pentapetalae</taxon>
        <taxon>rosids</taxon>
        <taxon>malvids</taxon>
        <taxon>Brassicales</taxon>
        <taxon>Brassicaceae</taxon>
        <taxon>Camelineae</taxon>
        <taxon>Arabidopsis</taxon>
    </lineage>
</organism>